<gene>
    <name evidence="1" type="primary">rplJ</name>
    <name type="ordered locus">YPTB0281</name>
</gene>
<organism>
    <name type="scientific">Yersinia pseudotuberculosis serotype I (strain IP32953)</name>
    <dbReference type="NCBI Taxonomy" id="273123"/>
    <lineage>
        <taxon>Bacteria</taxon>
        <taxon>Pseudomonadati</taxon>
        <taxon>Pseudomonadota</taxon>
        <taxon>Gammaproteobacteria</taxon>
        <taxon>Enterobacterales</taxon>
        <taxon>Yersiniaceae</taxon>
        <taxon>Yersinia</taxon>
    </lineage>
</organism>
<sequence>MALNLQGKQAIVAEVKEVAKGALSAVVADSRGVTVDKMTELRRAGREAGVHMQVVRNTLLRRIVEGTPFECLKDTFVGPTLIAFSAEHPGAAARLFKAFAKDNAKFEVKAAAFEGELIPAAQIDRLATLPTYEEAIARLMGTMKEAAAGKLVRTLAALRDQKEAA</sequence>
<name>RL10_YERPS</name>
<dbReference type="EMBL" id="BX936398">
    <property type="protein sequence ID" value="CAH19521.1"/>
    <property type="molecule type" value="Genomic_DNA"/>
</dbReference>
<dbReference type="RefSeq" id="WP_002210674.1">
    <property type="nucleotide sequence ID" value="NZ_CP009712.1"/>
</dbReference>
<dbReference type="GeneID" id="96663774"/>
<dbReference type="KEGG" id="ypo:BZ17_2293"/>
<dbReference type="KEGG" id="yps:YPTB0281"/>
<dbReference type="PATRIC" id="fig|273123.14.peg.2425"/>
<dbReference type="Proteomes" id="UP000001011">
    <property type="component" value="Chromosome"/>
</dbReference>
<dbReference type="GO" id="GO:0015934">
    <property type="term" value="C:large ribosomal subunit"/>
    <property type="evidence" value="ECO:0007669"/>
    <property type="project" value="InterPro"/>
</dbReference>
<dbReference type="GO" id="GO:0070180">
    <property type="term" value="F:large ribosomal subunit rRNA binding"/>
    <property type="evidence" value="ECO:0007669"/>
    <property type="project" value="UniProtKB-UniRule"/>
</dbReference>
<dbReference type="GO" id="GO:0003735">
    <property type="term" value="F:structural constituent of ribosome"/>
    <property type="evidence" value="ECO:0007669"/>
    <property type="project" value="InterPro"/>
</dbReference>
<dbReference type="GO" id="GO:0006412">
    <property type="term" value="P:translation"/>
    <property type="evidence" value="ECO:0007669"/>
    <property type="project" value="UniProtKB-UniRule"/>
</dbReference>
<dbReference type="CDD" id="cd05797">
    <property type="entry name" value="Ribosomal_L10"/>
    <property type="match status" value="1"/>
</dbReference>
<dbReference type="FunFam" id="3.30.70.1730:FF:000001">
    <property type="entry name" value="50S ribosomal protein L10"/>
    <property type="match status" value="1"/>
</dbReference>
<dbReference type="Gene3D" id="3.30.70.1730">
    <property type="match status" value="1"/>
</dbReference>
<dbReference type="Gene3D" id="6.10.250.2350">
    <property type="match status" value="1"/>
</dbReference>
<dbReference type="HAMAP" id="MF_00362">
    <property type="entry name" value="Ribosomal_uL10"/>
    <property type="match status" value="1"/>
</dbReference>
<dbReference type="InterPro" id="IPR001790">
    <property type="entry name" value="Ribosomal_uL10"/>
</dbReference>
<dbReference type="InterPro" id="IPR043141">
    <property type="entry name" value="Ribosomal_uL10-like_sf"/>
</dbReference>
<dbReference type="InterPro" id="IPR022973">
    <property type="entry name" value="Ribosomal_uL10_bac"/>
</dbReference>
<dbReference type="InterPro" id="IPR047865">
    <property type="entry name" value="Ribosomal_uL10_bac_type"/>
</dbReference>
<dbReference type="InterPro" id="IPR002363">
    <property type="entry name" value="Ribosomal_uL10_CS_bac"/>
</dbReference>
<dbReference type="NCBIfam" id="NF000955">
    <property type="entry name" value="PRK00099.1-1"/>
    <property type="match status" value="1"/>
</dbReference>
<dbReference type="PANTHER" id="PTHR11560">
    <property type="entry name" value="39S RIBOSOMAL PROTEIN L10, MITOCHONDRIAL"/>
    <property type="match status" value="1"/>
</dbReference>
<dbReference type="Pfam" id="PF00466">
    <property type="entry name" value="Ribosomal_L10"/>
    <property type="match status" value="1"/>
</dbReference>
<dbReference type="SUPFAM" id="SSF160369">
    <property type="entry name" value="Ribosomal protein L10-like"/>
    <property type="match status" value="1"/>
</dbReference>
<dbReference type="PROSITE" id="PS01109">
    <property type="entry name" value="RIBOSOMAL_L10"/>
    <property type="match status" value="1"/>
</dbReference>
<accession>Q66FQ4</accession>
<reference key="1">
    <citation type="journal article" date="2004" name="Proc. Natl. Acad. Sci. U.S.A.">
        <title>Insights into the evolution of Yersinia pestis through whole-genome comparison with Yersinia pseudotuberculosis.</title>
        <authorList>
            <person name="Chain P.S.G."/>
            <person name="Carniel E."/>
            <person name="Larimer F.W."/>
            <person name="Lamerdin J."/>
            <person name="Stoutland P.O."/>
            <person name="Regala W.M."/>
            <person name="Georgescu A.M."/>
            <person name="Vergez L.M."/>
            <person name="Land M.L."/>
            <person name="Motin V.L."/>
            <person name="Brubaker R.R."/>
            <person name="Fowler J."/>
            <person name="Hinnebusch J."/>
            <person name="Marceau M."/>
            <person name="Medigue C."/>
            <person name="Simonet M."/>
            <person name="Chenal-Francisque V."/>
            <person name="Souza B."/>
            <person name="Dacheux D."/>
            <person name="Elliott J.M."/>
            <person name="Derbise A."/>
            <person name="Hauser L.J."/>
            <person name="Garcia E."/>
        </authorList>
    </citation>
    <scope>NUCLEOTIDE SEQUENCE [LARGE SCALE GENOMIC DNA]</scope>
    <source>
        <strain>IP32953</strain>
    </source>
</reference>
<evidence type="ECO:0000255" key="1">
    <source>
        <dbReference type="HAMAP-Rule" id="MF_00362"/>
    </source>
</evidence>
<evidence type="ECO:0000305" key="2"/>
<protein>
    <recommendedName>
        <fullName evidence="1">Large ribosomal subunit protein uL10</fullName>
    </recommendedName>
    <alternativeName>
        <fullName evidence="2">50S ribosomal protein L10</fullName>
    </alternativeName>
</protein>
<keyword id="KW-0687">Ribonucleoprotein</keyword>
<keyword id="KW-0689">Ribosomal protein</keyword>
<keyword id="KW-0694">RNA-binding</keyword>
<keyword id="KW-0699">rRNA-binding</keyword>
<proteinExistence type="inferred from homology"/>
<feature type="chain" id="PRO_0000154754" description="Large ribosomal subunit protein uL10">
    <location>
        <begin position="1"/>
        <end position="165"/>
    </location>
</feature>
<comment type="function">
    <text evidence="1">Forms part of the ribosomal stalk, playing a central role in the interaction of the ribosome with GTP-bound translation factors.</text>
</comment>
<comment type="subunit">
    <text evidence="1">Part of the ribosomal stalk of the 50S ribosomal subunit. The N-terminus interacts with L11 and the large rRNA to form the base of the stalk. The C-terminus forms an elongated spine to which L12 dimers bind in a sequential fashion forming a multimeric L10(L12)X complex.</text>
</comment>
<comment type="similarity">
    <text evidence="1">Belongs to the universal ribosomal protein uL10 family.</text>
</comment>